<sequence length="241" mass="23063">MTCCGCSGGCGSSCGGCGCSGGCGSSCGGCGSSCCCKPVCCCKPVCCCVPACSCSSCGGCKGGCGSCGGCKGSCGSCGGCKGGCGSCGGCGSCGGCKPSCCQSSCCKPCCCQSSCCKPCCSSGCGSSCCQSSCCKPCCCQSSCCKPCCSSGCGSSCCQSSCCKPCCCQSSCCKPCCCQSSCCKPCCCQSSCCKPCCCQSSCCKPCCCQSSCCKPCCCQSSCCKPCCCQSSCCAPVCCQCKI</sequence>
<organism>
    <name type="scientific">Mus musculus</name>
    <name type="common">Mouse</name>
    <dbReference type="NCBI Taxonomy" id="10090"/>
    <lineage>
        <taxon>Eukaryota</taxon>
        <taxon>Metazoa</taxon>
        <taxon>Chordata</taxon>
        <taxon>Craniata</taxon>
        <taxon>Vertebrata</taxon>
        <taxon>Euteleostomi</taxon>
        <taxon>Mammalia</taxon>
        <taxon>Eutheria</taxon>
        <taxon>Euarchontoglires</taxon>
        <taxon>Glires</taxon>
        <taxon>Rodentia</taxon>
        <taxon>Myomorpha</taxon>
        <taxon>Muroidea</taxon>
        <taxon>Muridae</taxon>
        <taxon>Murinae</taxon>
        <taxon>Mus</taxon>
        <taxon>Mus</taxon>
    </lineage>
</organism>
<accession>Q2TA51</accession>
<comment type="function">
    <text evidence="3">In the hair cortex, hair keratin intermediate filaments are embedded in an interfilamentous matrix, consisting of hair keratin-associated protein (KRTAP), which are essential for the formation of a rigid and resistant hair shaft through their extensive disulfide bond cross-linking with abundant cysteine residues of hair keratins. The matrix proteins include the high-sulfur and high-glycine-tyrosine keratins.</text>
</comment>
<comment type="subunit">
    <text evidence="3">Interacts with hair keratins.</text>
</comment>
<comment type="similarity">
    <text evidence="1">Belongs to the KRTAP type 5 family.</text>
</comment>
<reference evidence="4" key="1">
    <citation type="journal article" date="2004" name="Genome Res.">
        <title>The status, quality, and expansion of the NIH full-length cDNA project: the Mammalian Gene Collection (MGC).</title>
        <authorList>
            <consortium name="The MGC Project Team"/>
        </authorList>
    </citation>
    <scope>NUCLEOTIDE SEQUENCE [LARGE SCALE MRNA]</scope>
</reference>
<proteinExistence type="evidence at transcript level"/>
<dbReference type="EMBL" id="BC111113">
    <property type="protein sequence ID" value="AAI11114.1"/>
    <property type="molecule type" value="mRNA"/>
</dbReference>
<dbReference type="CCDS" id="CCDS22026.1"/>
<dbReference type="RefSeq" id="NP_001032911.1">
    <property type="nucleotide sequence ID" value="NM_001037822.1"/>
</dbReference>
<dbReference type="STRING" id="10090.ENSMUSP00000095555"/>
<dbReference type="PaxDb" id="10090-ENSMUSP00000095555"/>
<dbReference type="Ensembl" id="ENSMUST00000097942.3">
    <property type="protein sequence ID" value="ENSMUSP00000095555.3"/>
    <property type="gene ID" value="ENSMUSG00000073785.3"/>
</dbReference>
<dbReference type="GeneID" id="114666"/>
<dbReference type="KEGG" id="mmu:114666"/>
<dbReference type="UCSC" id="uc009kmq.1">
    <property type="organism name" value="mouse"/>
</dbReference>
<dbReference type="AGR" id="MGI:2149673"/>
<dbReference type="CTD" id="439915"/>
<dbReference type="MGI" id="MGI:2149673">
    <property type="gene designation" value="Krtap5-5"/>
</dbReference>
<dbReference type="VEuPathDB" id="HostDB:ENSMUSG00000073785"/>
<dbReference type="eggNOG" id="KOG4726">
    <property type="taxonomic scope" value="Eukaryota"/>
</dbReference>
<dbReference type="GeneTree" id="ENSGT00940000164129"/>
<dbReference type="HOGENOM" id="CLU_097966_0_0_1"/>
<dbReference type="InParanoid" id="Q2TA51"/>
<dbReference type="OMA" id="CCKDAPC"/>
<dbReference type="Reactome" id="R-MMU-6805567">
    <property type="pathway name" value="Keratinization"/>
</dbReference>
<dbReference type="BioGRID-ORCS" id="114666">
    <property type="hits" value="3 hits in 53 CRISPR screens"/>
</dbReference>
<dbReference type="PRO" id="PR:Q2TA51"/>
<dbReference type="Proteomes" id="UP000000589">
    <property type="component" value="Chromosome 7"/>
</dbReference>
<dbReference type="RNAct" id="Q2TA51">
    <property type="molecule type" value="protein"/>
</dbReference>
<dbReference type="Bgee" id="ENSMUSG00000073785">
    <property type="expression patterns" value="Expressed in lip and 9 other cell types or tissues"/>
</dbReference>
<dbReference type="GO" id="GO:0005882">
    <property type="term" value="C:intermediate filament"/>
    <property type="evidence" value="ECO:0007669"/>
    <property type="project" value="UniProtKB-KW"/>
</dbReference>
<dbReference type="GO" id="GO:0002244">
    <property type="term" value="P:hematopoietic progenitor cell differentiation"/>
    <property type="evidence" value="ECO:0000315"/>
    <property type="project" value="MGI"/>
</dbReference>
<protein>
    <recommendedName>
        <fullName>Keratin-associated protein 5-5</fullName>
    </recommendedName>
</protein>
<feature type="chain" id="PRO_0000361661" description="Keratin-associated protein 5-5">
    <location>
        <begin position="1"/>
        <end position="241"/>
    </location>
</feature>
<feature type="repeat" description="1" evidence="2">
    <location>
        <begin position="35"/>
        <end position="38"/>
    </location>
</feature>
<feature type="repeat" description="2" evidence="2">
    <location>
        <begin position="41"/>
        <end position="44"/>
    </location>
</feature>
<feature type="repeat" description="3" evidence="2">
    <location>
        <begin position="47"/>
        <end position="50"/>
    </location>
</feature>
<feature type="repeat" description="4" evidence="2">
    <location>
        <begin position="105"/>
        <end position="108"/>
    </location>
</feature>
<feature type="repeat" description="5" evidence="2">
    <location>
        <begin position="115"/>
        <end position="118"/>
    </location>
</feature>
<feature type="repeat" description="6" evidence="2">
    <location>
        <begin position="133"/>
        <end position="136"/>
    </location>
</feature>
<feature type="repeat" description="7" evidence="2">
    <location>
        <begin position="143"/>
        <end position="146"/>
    </location>
</feature>
<feature type="repeat" description="8" evidence="2">
    <location>
        <begin position="161"/>
        <end position="164"/>
    </location>
</feature>
<feature type="repeat" description="9" evidence="2">
    <location>
        <begin position="171"/>
        <end position="174"/>
    </location>
</feature>
<feature type="repeat" description="10" evidence="2">
    <location>
        <begin position="181"/>
        <end position="184"/>
    </location>
</feature>
<feature type="repeat" description="11" evidence="2">
    <location>
        <begin position="191"/>
        <end position="194"/>
    </location>
</feature>
<feature type="repeat" description="12" evidence="2">
    <location>
        <begin position="201"/>
        <end position="204"/>
    </location>
</feature>
<feature type="repeat" description="13" evidence="2">
    <location>
        <begin position="211"/>
        <end position="214"/>
    </location>
</feature>
<feature type="repeat" description="14" evidence="2">
    <location>
        <begin position="221"/>
        <end position="224"/>
    </location>
</feature>
<feature type="repeat" description="15" evidence="2">
    <location>
        <begin position="231"/>
        <end position="234"/>
    </location>
</feature>
<feature type="region of interest" description="15 X 4 AA repeats of C-C-X-P" evidence="2">
    <location>
        <begin position="35"/>
        <end position="234"/>
    </location>
</feature>
<evidence type="ECO:0000250" key="1">
    <source>
        <dbReference type="UniProtKB" id="Q701N2"/>
    </source>
</evidence>
<evidence type="ECO:0000255" key="2"/>
<evidence type="ECO:0000305" key="3"/>
<evidence type="ECO:0000312" key="4">
    <source>
        <dbReference type="EMBL" id="AAI11114.1"/>
    </source>
</evidence>
<evidence type="ECO:0000312" key="5">
    <source>
        <dbReference type="MGI" id="MGI:2149673"/>
    </source>
</evidence>
<name>KRA55_MOUSE</name>
<gene>
    <name evidence="5" type="primary">Krtap5-5</name>
</gene>
<keyword id="KW-0416">Keratin</keyword>
<keyword id="KW-1185">Reference proteome</keyword>
<keyword id="KW-0677">Repeat</keyword>